<dbReference type="EC" id="2.7.4.22" evidence="1"/>
<dbReference type="EMBL" id="CR628336">
    <property type="protein sequence ID" value="CAH12829.1"/>
    <property type="molecule type" value="Genomic_DNA"/>
</dbReference>
<dbReference type="RefSeq" id="WP_011213983.1">
    <property type="nucleotide sequence ID" value="NC_006368.1"/>
</dbReference>
<dbReference type="SMR" id="Q5X4J9"/>
<dbReference type="KEGG" id="lpp:lpp1677"/>
<dbReference type="LegioList" id="lpp1677"/>
<dbReference type="HOGENOM" id="CLU_033861_0_0_6"/>
<dbReference type="UniPathway" id="UPA00159">
    <property type="reaction ID" value="UER00275"/>
</dbReference>
<dbReference type="GO" id="GO:0005829">
    <property type="term" value="C:cytosol"/>
    <property type="evidence" value="ECO:0007669"/>
    <property type="project" value="TreeGrafter"/>
</dbReference>
<dbReference type="GO" id="GO:0005524">
    <property type="term" value="F:ATP binding"/>
    <property type="evidence" value="ECO:0007669"/>
    <property type="project" value="UniProtKB-KW"/>
</dbReference>
<dbReference type="GO" id="GO:0033862">
    <property type="term" value="F:UMP kinase activity"/>
    <property type="evidence" value="ECO:0007669"/>
    <property type="project" value="UniProtKB-EC"/>
</dbReference>
<dbReference type="GO" id="GO:0044210">
    <property type="term" value="P:'de novo' CTP biosynthetic process"/>
    <property type="evidence" value="ECO:0007669"/>
    <property type="project" value="UniProtKB-UniRule"/>
</dbReference>
<dbReference type="GO" id="GO:0006225">
    <property type="term" value="P:UDP biosynthetic process"/>
    <property type="evidence" value="ECO:0007669"/>
    <property type="project" value="TreeGrafter"/>
</dbReference>
<dbReference type="CDD" id="cd04254">
    <property type="entry name" value="AAK_UMPK-PyrH-Ec"/>
    <property type="match status" value="1"/>
</dbReference>
<dbReference type="FunFam" id="3.40.1160.10:FF:000001">
    <property type="entry name" value="Uridylate kinase"/>
    <property type="match status" value="1"/>
</dbReference>
<dbReference type="Gene3D" id="3.40.1160.10">
    <property type="entry name" value="Acetylglutamate kinase-like"/>
    <property type="match status" value="1"/>
</dbReference>
<dbReference type="HAMAP" id="MF_01220_B">
    <property type="entry name" value="PyrH_B"/>
    <property type="match status" value="1"/>
</dbReference>
<dbReference type="InterPro" id="IPR036393">
    <property type="entry name" value="AceGlu_kinase-like_sf"/>
</dbReference>
<dbReference type="InterPro" id="IPR001048">
    <property type="entry name" value="Asp/Glu/Uridylate_kinase"/>
</dbReference>
<dbReference type="InterPro" id="IPR011817">
    <property type="entry name" value="Uridylate_kinase"/>
</dbReference>
<dbReference type="InterPro" id="IPR015963">
    <property type="entry name" value="Uridylate_kinase_bac"/>
</dbReference>
<dbReference type="NCBIfam" id="TIGR02075">
    <property type="entry name" value="pyrH_bact"/>
    <property type="match status" value="1"/>
</dbReference>
<dbReference type="PANTHER" id="PTHR42833">
    <property type="entry name" value="URIDYLATE KINASE"/>
    <property type="match status" value="1"/>
</dbReference>
<dbReference type="PANTHER" id="PTHR42833:SF4">
    <property type="entry name" value="URIDYLATE KINASE PUMPKIN, CHLOROPLASTIC"/>
    <property type="match status" value="1"/>
</dbReference>
<dbReference type="Pfam" id="PF00696">
    <property type="entry name" value="AA_kinase"/>
    <property type="match status" value="1"/>
</dbReference>
<dbReference type="PIRSF" id="PIRSF005650">
    <property type="entry name" value="Uridylate_kin"/>
    <property type="match status" value="1"/>
</dbReference>
<dbReference type="SUPFAM" id="SSF53633">
    <property type="entry name" value="Carbamate kinase-like"/>
    <property type="match status" value="1"/>
</dbReference>
<gene>
    <name evidence="1" type="primary">pyrH</name>
    <name type="ordered locus">lpp1677</name>
</gene>
<name>PYRH_LEGPA</name>
<organism>
    <name type="scientific">Legionella pneumophila (strain Paris)</name>
    <dbReference type="NCBI Taxonomy" id="297246"/>
    <lineage>
        <taxon>Bacteria</taxon>
        <taxon>Pseudomonadati</taxon>
        <taxon>Pseudomonadota</taxon>
        <taxon>Gammaproteobacteria</taxon>
        <taxon>Legionellales</taxon>
        <taxon>Legionellaceae</taxon>
        <taxon>Legionella</taxon>
    </lineage>
</organism>
<feature type="chain" id="PRO_0000323872" description="Uridylate kinase">
    <location>
        <begin position="1"/>
        <end position="247"/>
    </location>
</feature>
<feature type="binding site" evidence="1">
    <location>
        <begin position="17"/>
        <end position="20"/>
    </location>
    <ligand>
        <name>ATP</name>
        <dbReference type="ChEBI" id="CHEBI:30616"/>
    </ligand>
</feature>
<feature type="binding site" evidence="1">
    <location>
        <position position="59"/>
    </location>
    <ligand>
        <name>UMP</name>
        <dbReference type="ChEBI" id="CHEBI:57865"/>
    </ligand>
</feature>
<feature type="binding site" evidence="1">
    <location>
        <position position="60"/>
    </location>
    <ligand>
        <name>ATP</name>
        <dbReference type="ChEBI" id="CHEBI:30616"/>
    </ligand>
</feature>
<feature type="binding site" evidence="1">
    <location>
        <position position="64"/>
    </location>
    <ligand>
        <name>ATP</name>
        <dbReference type="ChEBI" id="CHEBI:30616"/>
    </ligand>
</feature>
<feature type="binding site" evidence="1">
    <location>
        <position position="79"/>
    </location>
    <ligand>
        <name>UMP</name>
        <dbReference type="ChEBI" id="CHEBI:57865"/>
    </ligand>
</feature>
<feature type="binding site" evidence="1">
    <location>
        <begin position="140"/>
        <end position="147"/>
    </location>
    <ligand>
        <name>UMP</name>
        <dbReference type="ChEBI" id="CHEBI:57865"/>
    </ligand>
</feature>
<feature type="binding site" evidence="1">
    <location>
        <position position="167"/>
    </location>
    <ligand>
        <name>ATP</name>
        <dbReference type="ChEBI" id="CHEBI:30616"/>
    </ligand>
</feature>
<feature type="binding site" evidence="1">
    <location>
        <position position="173"/>
    </location>
    <ligand>
        <name>ATP</name>
        <dbReference type="ChEBI" id="CHEBI:30616"/>
    </ligand>
</feature>
<feature type="binding site" evidence="1">
    <location>
        <position position="176"/>
    </location>
    <ligand>
        <name>ATP</name>
        <dbReference type="ChEBI" id="CHEBI:30616"/>
    </ligand>
</feature>
<protein>
    <recommendedName>
        <fullName evidence="1">Uridylate kinase</fullName>
        <shortName evidence="1">UK</shortName>
        <ecNumber evidence="1">2.7.4.22</ecNumber>
    </recommendedName>
    <alternativeName>
        <fullName evidence="1">Uridine monophosphate kinase</fullName>
        <shortName evidence="1">UMP kinase</shortName>
        <shortName evidence="1">UMPK</shortName>
    </alternativeName>
</protein>
<evidence type="ECO:0000255" key="1">
    <source>
        <dbReference type="HAMAP-Rule" id="MF_01220"/>
    </source>
</evidence>
<sequence length="247" mass="26642">MMNESQPKLKYKRILLKFSGEALMGKSQFGIDPSVLDSLARDIAELIHMGVEVGLVLGGGNLFRGKALSQAGVGRVTGDHMGMLATLMNALALRDALERIDLPARIMSAIPMLGVVDPYHRRKAITHLRNGQVVIFAAGTGNPFFTTDTAACLRAIEIGADIVLKATKVDGVYSADPLKNPDAKRYDYLTYKEVLTKGLEVMDSTAICLCQDQGMPLQVFDMAAPNALKRIVTGEQVGTIVGANHDQ</sequence>
<keyword id="KW-0067">ATP-binding</keyword>
<keyword id="KW-0963">Cytoplasm</keyword>
<keyword id="KW-0418">Kinase</keyword>
<keyword id="KW-0547">Nucleotide-binding</keyword>
<keyword id="KW-0665">Pyrimidine biosynthesis</keyword>
<keyword id="KW-0808">Transferase</keyword>
<comment type="function">
    <text evidence="1">Catalyzes the reversible phosphorylation of UMP to UDP.</text>
</comment>
<comment type="catalytic activity">
    <reaction evidence="1">
        <text>UMP + ATP = UDP + ADP</text>
        <dbReference type="Rhea" id="RHEA:24400"/>
        <dbReference type="ChEBI" id="CHEBI:30616"/>
        <dbReference type="ChEBI" id="CHEBI:57865"/>
        <dbReference type="ChEBI" id="CHEBI:58223"/>
        <dbReference type="ChEBI" id="CHEBI:456216"/>
        <dbReference type="EC" id="2.7.4.22"/>
    </reaction>
</comment>
<comment type="activity regulation">
    <text evidence="1">Inhibited by UTP.</text>
</comment>
<comment type="pathway">
    <text evidence="1">Pyrimidine metabolism; CTP biosynthesis via de novo pathway; UDP from UMP (UMPK route): step 1/1.</text>
</comment>
<comment type="subunit">
    <text evidence="1">Homohexamer.</text>
</comment>
<comment type="subcellular location">
    <subcellularLocation>
        <location evidence="1">Cytoplasm</location>
    </subcellularLocation>
</comment>
<comment type="similarity">
    <text evidence="1">Belongs to the UMP kinase family.</text>
</comment>
<reference key="1">
    <citation type="journal article" date="2004" name="Nat. Genet.">
        <title>Evidence in the Legionella pneumophila genome for exploitation of host cell functions and high genome plasticity.</title>
        <authorList>
            <person name="Cazalet C."/>
            <person name="Rusniok C."/>
            <person name="Brueggemann H."/>
            <person name="Zidane N."/>
            <person name="Magnier A."/>
            <person name="Ma L."/>
            <person name="Tichit M."/>
            <person name="Jarraud S."/>
            <person name="Bouchier C."/>
            <person name="Vandenesch F."/>
            <person name="Kunst F."/>
            <person name="Etienne J."/>
            <person name="Glaser P."/>
            <person name="Buchrieser C."/>
        </authorList>
    </citation>
    <scope>NUCLEOTIDE SEQUENCE [LARGE SCALE GENOMIC DNA]</scope>
    <source>
        <strain>Paris</strain>
    </source>
</reference>
<accession>Q5X4J9</accession>
<proteinExistence type="inferred from homology"/>